<feature type="chain" id="PRO_0000056790" description="CDP-diacylglycerol--glycerol-3-phosphate 3-phosphatidyltransferase">
    <location>
        <begin position="1"/>
        <end position="193"/>
    </location>
</feature>
<feature type="transmembrane region" description="Helical" evidence="2">
    <location>
        <begin position="7"/>
        <end position="29"/>
    </location>
</feature>
<feature type="transmembrane region" description="Helical" evidence="2">
    <location>
        <begin position="44"/>
        <end position="63"/>
    </location>
</feature>
<feature type="transmembrane region" description="Helical" evidence="2">
    <location>
        <begin position="84"/>
        <end position="106"/>
    </location>
</feature>
<feature type="transmembrane region" description="Helical" evidence="2">
    <location>
        <begin position="129"/>
        <end position="151"/>
    </location>
</feature>
<feature type="transmembrane region" description="Helical" evidence="2">
    <location>
        <begin position="157"/>
        <end position="179"/>
    </location>
</feature>
<organism>
    <name type="scientific">Staphylococcus epidermidis (strain ATCC 12228 / FDA PCI 1200)</name>
    <dbReference type="NCBI Taxonomy" id="176280"/>
    <lineage>
        <taxon>Bacteria</taxon>
        <taxon>Bacillati</taxon>
        <taxon>Bacillota</taxon>
        <taxon>Bacilli</taxon>
        <taxon>Bacillales</taxon>
        <taxon>Staphylococcaceae</taxon>
        <taxon>Staphylococcus</taxon>
    </lineage>
</organism>
<keyword id="KW-1003">Cell membrane</keyword>
<keyword id="KW-0444">Lipid biosynthesis</keyword>
<keyword id="KW-0443">Lipid metabolism</keyword>
<keyword id="KW-0472">Membrane</keyword>
<keyword id="KW-0594">Phospholipid biosynthesis</keyword>
<keyword id="KW-1208">Phospholipid metabolism</keyword>
<keyword id="KW-0808">Transferase</keyword>
<keyword id="KW-0812">Transmembrane</keyword>
<keyword id="KW-1133">Transmembrane helix</keyword>
<name>PGSA_STAES</name>
<proteinExistence type="inferred from homology"/>
<gene>
    <name type="primary">pgsA</name>
    <name type="ordered locus">SE_0960</name>
</gene>
<comment type="function">
    <text evidence="1">This protein catalyzes the committed step to the synthesis of the acidic phospholipids.</text>
</comment>
<comment type="catalytic activity">
    <reaction>
        <text>a CDP-1,2-diacyl-sn-glycerol + sn-glycerol 3-phosphate = a 1,2-diacyl-sn-glycero-3-phospho-(1'-sn-glycero-3'-phosphate) + CMP + H(+)</text>
        <dbReference type="Rhea" id="RHEA:12593"/>
        <dbReference type="ChEBI" id="CHEBI:15378"/>
        <dbReference type="ChEBI" id="CHEBI:57597"/>
        <dbReference type="ChEBI" id="CHEBI:58332"/>
        <dbReference type="ChEBI" id="CHEBI:60110"/>
        <dbReference type="ChEBI" id="CHEBI:60377"/>
        <dbReference type="EC" id="2.7.8.5"/>
    </reaction>
</comment>
<comment type="pathway">
    <text>Phospholipid metabolism; phosphatidylglycerol biosynthesis; phosphatidylglycerol from CDP-diacylglycerol: step 1/2.</text>
</comment>
<comment type="subcellular location">
    <subcellularLocation>
        <location evidence="1">Cell membrane</location>
        <topology evidence="1">Multi-pass membrane protein</topology>
    </subcellularLocation>
</comment>
<comment type="similarity">
    <text evidence="3">Belongs to the CDP-alcohol phosphatidyltransferase class-I family.</text>
</comment>
<accession>Q8CPF7</accession>
<protein>
    <recommendedName>
        <fullName>CDP-diacylglycerol--glycerol-3-phosphate 3-phosphatidyltransferase</fullName>
        <ecNumber>2.7.8.5</ecNumber>
    </recommendedName>
    <alternativeName>
        <fullName>Phosphatidylglycerophosphate synthase</fullName>
        <shortName>PGP synthase</shortName>
    </alternativeName>
</protein>
<dbReference type="EC" id="2.7.8.5"/>
<dbReference type="EMBL" id="AE015929">
    <property type="protein sequence ID" value="AAO04557.1"/>
    <property type="molecule type" value="Genomic_DNA"/>
</dbReference>
<dbReference type="RefSeq" id="NP_764515.1">
    <property type="nucleotide sequence ID" value="NC_004461.1"/>
</dbReference>
<dbReference type="RefSeq" id="WP_002439546.1">
    <property type="nucleotide sequence ID" value="NZ_WBME01000001.1"/>
</dbReference>
<dbReference type="SMR" id="Q8CPF7"/>
<dbReference type="KEGG" id="sep:SE_0960"/>
<dbReference type="PATRIC" id="fig|176280.10.peg.934"/>
<dbReference type="eggNOG" id="COG0558">
    <property type="taxonomic scope" value="Bacteria"/>
</dbReference>
<dbReference type="HOGENOM" id="CLU_051314_2_3_9"/>
<dbReference type="OrthoDB" id="9796672at2"/>
<dbReference type="UniPathway" id="UPA00084">
    <property type="reaction ID" value="UER00503"/>
</dbReference>
<dbReference type="Proteomes" id="UP000001411">
    <property type="component" value="Chromosome"/>
</dbReference>
<dbReference type="GO" id="GO:0005886">
    <property type="term" value="C:plasma membrane"/>
    <property type="evidence" value="ECO:0007669"/>
    <property type="project" value="UniProtKB-SubCell"/>
</dbReference>
<dbReference type="GO" id="GO:0008444">
    <property type="term" value="F:CDP-diacylglycerol-glycerol-3-phosphate 3-phosphatidyltransferase activity"/>
    <property type="evidence" value="ECO:0007669"/>
    <property type="project" value="UniProtKB-EC"/>
</dbReference>
<dbReference type="GO" id="GO:0006655">
    <property type="term" value="P:phosphatidylglycerol biosynthetic process"/>
    <property type="evidence" value="ECO:0007669"/>
    <property type="project" value="UniProtKB-UniPathway"/>
</dbReference>
<dbReference type="FunFam" id="1.20.120.1760:FF:000004">
    <property type="entry name" value="CDP-diacylglycerol--glycerol-3-phosphate 3-phosphatidyltransferase"/>
    <property type="match status" value="1"/>
</dbReference>
<dbReference type="Gene3D" id="1.20.120.1760">
    <property type="match status" value="1"/>
</dbReference>
<dbReference type="InterPro" id="IPR050324">
    <property type="entry name" value="CDP-alcohol_PTase-I"/>
</dbReference>
<dbReference type="InterPro" id="IPR000462">
    <property type="entry name" value="CDP-OH_P_trans"/>
</dbReference>
<dbReference type="InterPro" id="IPR043130">
    <property type="entry name" value="CDP-OH_PTrfase_TM_dom"/>
</dbReference>
<dbReference type="InterPro" id="IPR048254">
    <property type="entry name" value="CDP_ALCOHOL_P_TRANSF_CS"/>
</dbReference>
<dbReference type="InterPro" id="IPR004570">
    <property type="entry name" value="Phosphatidylglycerol_P_synth"/>
</dbReference>
<dbReference type="NCBIfam" id="TIGR00560">
    <property type="entry name" value="pgsA"/>
    <property type="match status" value="1"/>
</dbReference>
<dbReference type="PANTHER" id="PTHR14269:SF62">
    <property type="entry name" value="CDP-DIACYLGLYCEROL--GLYCEROL-3-PHOSPHATE 3-PHOSPHATIDYLTRANSFERASE 1, CHLOROPLASTIC"/>
    <property type="match status" value="1"/>
</dbReference>
<dbReference type="PANTHER" id="PTHR14269">
    <property type="entry name" value="CDP-DIACYLGLYCEROL--GLYCEROL-3-PHOSPHATE 3-PHOSPHATIDYLTRANSFERASE-RELATED"/>
    <property type="match status" value="1"/>
</dbReference>
<dbReference type="Pfam" id="PF01066">
    <property type="entry name" value="CDP-OH_P_transf"/>
    <property type="match status" value="1"/>
</dbReference>
<dbReference type="PIRSF" id="PIRSF000847">
    <property type="entry name" value="Phos_ph_gly_syn"/>
    <property type="match status" value="1"/>
</dbReference>
<dbReference type="PROSITE" id="PS00379">
    <property type="entry name" value="CDP_ALCOHOL_P_TRANSF"/>
    <property type="match status" value="1"/>
</dbReference>
<evidence type="ECO:0000250" key="1"/>
<evidence type="ECO:0000255" key="2"/>
<evidence type="ECO:0000305" key="3"/>
<sequence length="193" mass="21497">MNIPNQITVFRVILIPFFILFALVDFGFGQISILGGNHIRIEILISAIIFVVASLSDFADGYLARKWQLVTNMGKFLDPLADKLLVASALIVMVQLGFTNSVVAIIIIAREFAVTGLRLLQIEQGFVSAAGQLGKIKTAVTMVAIIWILLGDPFVHYLRFPIGVWLLYIGVFFTILSGIEYFYKGRDVFKHSK</sequence>
<reference key="1">
    <citation type="journal article" date="2003" name="Mol. Microbiol.">
        <title>Genome-based analysis of virulence genes in a non-biofilm-forming Staphylococcus epidermidis strain (ATCC 12228).</title>
        <authorList>
            <person name="Zhang Y.-Q."/>
            <person name="Ren S.-X."/>
            <person name="Li H.-L."/>
            <person name="Wang Y.-X."/>
            <person name="Fu G."/>
            <person name="Yang J."/>
            <person name="Qin Z.-Q."/>
            <person name="Miao Y.-G."/>
            <person name="Wang W.-Y."/>
            <person name="Chen R.-S."/>
            <person name="Shen Y."/>
            <person name="Chen Z."/>
            <person name="Yuan Z.-H."/>
            <person name="Zhao G.-P."/>
            <person name="Qu D."/>
            <person name="Danchin A."/>
            <person name="Wen Y.-M."/>
        </authorList>
    </citation>
    <scope>NUCLEOTIDE SEQUENCE [LARGE SCALE GENOMIC DNA]</scope>
    <source>
        <strain>ATCC 12228 / FDA PCI 1200</strain>
    </source>
</reference>